<evidence type="ECO:0000255" key="1">
    <source>
        <dbReference type="HAMAP-Rule" id="MF_01347"/>
    </source>
</evidence>
<accession>B3H2P3</accession>
<keyword id="KW-0066">ATP synthesis</keyword>
<keyword id="KW-0067">ATP-binding</keyword>
<keyword id="KW-0997">Cell inner membrane</keyword>
<keyword id="KW-1003">Cell membrane</keyword>
<keyword id="KW-0139">CF(1)</keyword>
<keyword id="KW-0375">Hydrogen ion transport</keyword>
<keyword id="KW-0406">Ion transport</keyword>
<keyword id="KW-0472">Membrane</keyword>
<keyword id="KW-0547">Nucleotide-binding</keyword>
<keyword id="KW-1278">Translocase</keyword>
<keyword id="KW-0813">Transport</keyword>
<name>ATPB_ACTP7</name>
<organism>
    <name type="scientific">Actinobacillus pleuropneumoniae serotype 7 (strain AP76)</name>
    <dbReference type="NCBI Taxonomy" id="537457"/>
    <lineage>
        <taxon>Bacteria</taxon>
        <taxon>Pseudomonadati</taxon>
        <taxon>Pseudomonadota</taxon>
        <taxon>Gammaproteobacteria</taxon>
        <taxon>Pasteurellales</taxon>
        <taxon>Pasteurellaceae</taxon>
        <taxon>Actinobacillus</taxon>
    </lineage>
</organism>
<proteinExistence type="inferred from homology"/>
<comment type="function">
    <text evidence="1">Produces ATP from ADP in the presence of a proton gradient across the membrane. The catalytic sites are hosted primarily by the beta subunits.</text>
</comment>
<comment type="catalytic activity">
    <reaction evidence="1">
        <text>ATP + H2O + 4 H(+)(in) = ADP + phosphate + 5 H(+)(out)</text>
        <dbReference type="Rhea" id="RHEA:57720"/>
        <dbReference type="ChEBI" id="CHEBI:15377"/>
        <dbReference type="ChEBI" id="CHEBI:15378"/>
        <dbReference type="ChEBI" id="CHEBI:30616"/>
        <dbReference type="ChEBI" id="CHEBI:43474"/>
        <dbReference type="ChEBI" id="CHEBI:456216"/>
        <dbReference type="EC" id="7.1.2.2"/>
    </reaction>
</comment>
<comment type="subunit">
    <text evidence="1">F-type ATPases have 2 components, CF(1) - the catalytic core - and CF(0) - the membrane proton channel. CF(1) has five subunits: alpha(3), beta(3), gamma(1), delta(1), epsilon(1). CF(0) has three main subunits: a(1), b(2) and c(9-12). The alpha and beta chains form an alternating ring which encloses part of the gamma chain. CF(1) is attached to CF(0) by a central stalk formed by the gamma and epsilon chains, while a peripheral stalk is formed by the delta and b chains.</text>
</comment>
<comment type="subcellular location">
    <subcellularLocation>
        <location evidence="1">Cell inner membrane</location>
        <topology evidence="1">Peripheral membrane protein</topology>
    </subcellularLocation>
</comment>
<comment type="similarity">
    <text evidence="1">Belongs to the ATPase alpha/beta chains family.</text>
</comment>
<feature type="chain" id="PRO_1000143465" description="ATP synthase subunit beta">
    <location>
        <begin position="1"/>
        <end position="457"/>
    </location>
</feature>
<feature type="binding site" evidence="1">
    <location>
        <begin position="147"/>
        <end position="154"/>
    </location>
    <ligand>
        <name>ATP</name>
        <dbReference type="ChEBI" id="CHEBI:30616"/>
    </ligand>
</feature>
<dbReference type="EC" id="7.1.2.2" evidence="1"/>
<dbReference type="EMBL" id="CP001091">
    <property type="protein sequence ID" value="ACE62360.1"/>
    <property type="molecule type" value="Genomic_DNA"/>
</dbReference>
<dbReference type="RefSeq" id="WP_005599061.1">
    <property type="nucleotide sequence ID" value="NC_010939.1"/>
</dbReference>
<dbReference type="SMR" id="B3H2P3"/>
<dbReference type="GeneID" id="92743772"/>
<dbReference type="KEGG" id="apa:APP7_1708"/>
<dbReference type="HOGENOM" id="CLU_022398_0_2_6"/>
<dbReference type="Proteomes" id="UP000001226">
    <property type="component" value="Chromosome"/>
</dbReference>
<dbReference type="GO" id="GO:0005886">
    <property type="term" value="C:plasma membrane"/>
    <property type="evidence" value="ECO:0007669"/>
    <property type="project" value="UniProtKB-SubCell"/>
</dbReference>
<dbReference type="GO" id="GO:0045259">
    <property type="term" value="C:proton-transporting ATP synthase complex"/>
    <property type="evidence" value="ECO:0007669"/>
    <property type="project" value="UniProtKB-KW"/>
</dbReference>
<dbReference type="GO" id="GO:0005524">
    <property type="term" value="F:ATP binding"/>
    <property type="evidence" value="ECO:0007669"/>
    <property type="project" value="UniProtKB-UniRule"/>
</dbReference>
<dbReference type="GO" id="GO:0016887">
    <property type="term" value="F:ATP hydrolysis activity"/>
    <property type="evidence" value="ECO:0007669"/>
    <property type="project" value="InterPro"/>
</dbReference>
<dbReference type="GO" id="GO:0046933">
    <property type="term" value="F:proton-transporting ATP synthase activity, rotational mechanism"/>
    <property type="evidence" value="ECO:0007669"/>
    <property type="project" value="UniProtKB-UniRule"/>
</dbReference>
<dbReference type="CDD" id="cd18110">
    <property type="entry name" value="ATP-synt_F1_beta_C"/>
    <property type="match status" value="1"/>
</dbReference>
<dbReference type="CDD" id="cd18115">
    <property type="entry name" value="ATP-synt_F1_beta_N"/>
    <property type="match status" value="1"/>
</dbReference>
<dbReference type="CDD" id="cd01133">
    <property type="entry name" value="F1-ATPase_beta_CD"/>
    <property type="match status" value="1"/>
</dbReference>
<dbReference type="FunFam" id="1.10.1140.10:FF:000001">
    <property type="entry name" value="ATP synthase subunit beta"/>
    <property type="match status" value="1"/>
</dbReference>
<dbReference type="FunFam" id="2.40.10.170:FF:000003">
    <property type="entry name" value="ATP synthase subunit beta"/>
    <property type="match status" value="1"/>
</dbReference>
<dbReference type="FunFam" id="3.40.50.300:FF:000004">
    <property type="entry name" value="ATP synthase subunit beta"/>
    <property type="match status" value="1"/>
</dbReference>
<dbReference type="Gene3D" id="2.40.10.170">
    <property type="match status" value="1"/>
</dbReference>
<dbReference type="Gene3D" id="1.10.1140.10">
    <property type="entry name" value="Bovine Mitochondrial F1-atpase, Atp Synthase Beta Chain, Chain D, domain 3"/>
    <property type="match status" value="1"/>
</dbReference>
<dbReference type="Gene3D" id="3.40.50.300">
    <property type="entry name" value="P-loop containing nucleotide triphosphate hydrolases"/>
    <property type="match status" value="1"/>
</dbReference>
<dbReference type="HAMAP" id="MF_01347">
    <property type="entry name" value="ATP_synth_beta_bact"/>
    <property type="match status" value="1"/>
</dbReference>
<dbReference type="InterPro" id="IPR003593">
    <property type="entry name" value="AAA+_ATPase"/>
</dbReference>
<dbReference type="InterPro" id="IPR055190">
    <property type="entry name" value="ATP-synt_VA_C"/>
</dbReference>
<dbReference type="InterPro" id="IPR005722">
    <property type="entry name" value="ATP_synth_F1_bsu"/>
</dbReference>
<dbReference type="InterPro" id="IPR020003">
    <property type="entry name" value="ATPase_a/bsu_AS"/>
</dbReference>
<dbReference type="InterPro" id="IPR050053">
    <property type="entry name" value="ATPase_alpha/beta_chains"/>
</dbReference>
<dbReference type="InterPro" id="IPR004100">
    <property type="entry name" value="ATPase_F1/V1/A1_a/bsu_N"/>
</dbReference>
<dbReference type="InterPro" id="IPR036121">
    <property type="entry name" value="ATPase_F1/V1/A1_a/bsu_N_sf"/>
</dbReference>
<dbReference type="InterPro" id="IPR000194">
    <property type="entry name" value="ATPase_F1/V1/A1_a/bsu_nucl-bd"/>
</dbReference>
<dbReference type="InterPro" id="IPR024034">
    <property type="entry name" value="ATPase_F1/V1_b/a_C"/>
</dbReference>
<dbReference type="InterPro" id="IPR027417">
    <property type="entry name" value="P-loop_NTPase"/>
</dbReference>
<dbReference type="NCBIfam" id="TIGR01039">
    <property type="entry name" value="atpD"/>
    <property type="match status" value="1"/>
</dbReference>
<dbReference type="PANTHER" id="PTHR15184">
    <property type="entry name" value="ATP SYNTHASE"/>
    <property type="match status" value="1"/>
</dbReference>
<dbReference type="PANTHER" id="PTHR15184:SF71">
    <property type="entry name" value="ATP SYNTHASE SUBUNIT BETA, MITOCHONDRIAL"/>
    <property type="match status" value="1"/>
</dbReference>
<dbReference type="Pfam" id="PF00006">
    <property type="entry name" value="ATP-synt_ab"/>
    <property type="match status" value="1"/>
</dbReference>
<dbReference type="Pfam" id="PF02874">
    <property type="entry name" value="ATP-synt_ab_N"/>
    <property type="match status" value="1"/>
</dbReference>
<dbReference type="Pfam" id="PF22919">
    <property type="entry name" value="ATP-synt_VA_C"/>
    <property type="match status" value="1"/>
</dbReference>
<dbReference type="SMART" id="SM00382">
    <property type="entry name" value="AAA"/>
    <property type="match status" value="1"/>
</dbReference>
<dbReference type="SUPFAM" id="SSF47917">
    <property type="entry name" value="C-terminal domain of alpha and beta subunits of F1 ATP synthase"/>
    <property type="match status" value="1"/>
</dbReference>
<dbReference type="SUPFAM" id="SSF50615">
    <property type="entry name" value="N-terminal domain of alpha and beta subunits of F1 ATP synthase"/>
    <property type="match status" value="1"/>
</dbReference>
<dbReference type="SUPFAM" id="SSF52540">
    <property type="entry name" value="P-loop containing nucleoside triphosphate hydrolases"/>
    <property type="match status" value="1"/>
</dbReference>
<dbReference type="PROSITE" id="PS00152">
    <property type="entry name" value="ATPASE_ALPHA_BETA"/>
    <property type="match status" value="1"/>
</dbReference>
<sequence length="457" mass="49678">MATGKIVQIIGAVIDVEFPQDAVPKVYDALKVESGLTLEVQQQLGGGLVRCIALGTSDGLKRGLKVENTGNPIQVPVGTKTLGRIMNVLGEPIDEKGPIGEEARWDIHRAAPSYEEQSNSTELLETGIKVIDLICPFAKGGKVGLFGGAGVGKTVNMMELIRNIAIEHSGYSVFAGVGERTREGNDFYHEMTDSNVLDKVSLVYGQMNEPPGNRLRVALTGLTMAEKFRDEGRDVLFFVDNIYRYTLAGTEVSALLGRMPSAVGYQPTLAEEMGVLQERITSTKTGSITSVQAVYVPADDLTDPSPATTFAHLDSTVVLSRNIASLGIYPAVDPLDSTSRQLDPLVVGEEHYNVARGVQGTLQRYKELKDIIAILGMDELSEDDKLVVARARKIERFLSQPFFVAEVFTGSPGKYVSLKDTIRGFKGILEGEFDHIPEQAFYMAGSIDEVVERASKM</sequence>
<reference key="1">
    <citation type="submission" date="2008-06" db="EMBL/GenBank/DDBJ databases">
        <title>Genome and proteome analysis of A. pleuropneumoniae serotype 7.</title>
        <authorList>
            <person name="Linke B."/>
            <person name="Buettner F."/>
            <person name="Martinez-Arias R."/>
            <person name="Goesmann A."/>
            <person name="Baltes N."/>
            <person name="Tegetmeyer H."/>
            <person name="Singh M."/>
            <person name="Gerlach G.F."/>
        </authorList>
    </citation>
    <scope>NUCLEOTIDE SEQUENCE [LARGE SCALE GENOMIC DNA]</scope>
    <source>
        <strain>AP76</strain>
    </source>
</reference>
<protein>
    <recommendedName>
        <fullName evidence="1">ATP synthase subunit beta</fullName>
        <ecNumber evidence="1">7.1.2.2</ecNumber>
    </recommendedName>
    <alternativeName>
        <fullName evidence="1">ATP synthase F1 sector subunit beta</fullName>
    </alternativeName>
    <alternativeName>
        <fullName evidence="1">F-ATPase subunit beta</fullName>
    </alternativeName>
</protein>
<gene>
    <name evidence="1" type="primary">atpD</name>
    <name type="ordered locus">APP7_1708</name>
</gene>